<proteinExistence type="inferred from homology"/>
<reference key="1">
    <citation type="submission" date="2006-05" db="EMBL/GenBank/DDBJ databases">
        <authorList>
            <person name="Skorczyk A."/>
            <person name="Switonski M."/>
        </authorList>
    </citation>
    <scope>NUCLEOTIDE SEQUENCE [GENOMIC DNA]</scope>
</reference>
<comment type="function">
    <text evidence="2 3">Hormone receptor that acts as a key component of the leptin-melanocortin pathway at the intersection of homeostatic maintenance of energetic state. Plays a role in regulating food intake: activation by a stimulating hormone such as anorexigenic alpha-melanocyte stimulating hormone (alpha-MSH) inhibits appetite, whereas binding to a natural antagonist like Agouti-related protein/AGRP promotes appetite. G-protein-coupled receptor that activates conventional Galphas signaling leading to induction of anorexogenic signaling in the hypothalamus to result in negative energy balance (By similarity). Regulates the firing activity of neurons from the hypothalamus by alpha-MSH and AGRP independently of Galphas signaling by ligand-induced coupling of closure of inwardly rectifying potassium channel KCNJ13 (By similarity). In intestinal epithelial cells, plays a role in the inhibition of hepatic glucose production via nesfatin-1/NUCB2 leading to increased cyclic adenosine monophosphate (cAMP) levels and glucagon-like peptide 1 (GLP-1) secretion in the intestinal epithelium (By similarity).</text>
</comment>
<comment type="subunit">
    <text evidence="1 2">Homodimer; disulfide-linked, also forms higher order oligomers. Interacts with GNAS (By similarity). Interacts with ATRNL1 (By similarity). Interacts with MGRN1; this interaction competes with GNAS-binding and thus inhibits agonist-induced cAMP production. Interacts with MRAP and MRAP2; these associated factors increase ligand-sensitivity and generation of cAMP (By similarity).</text>
</comment>
<comment type="subcellular location">
    <subcellularLocation>
        <location evidence="2">Cell membrane</location>
        <topology evidence="4">Multi-pass membrane protein</topology>
    </subcellularLocation>
</comment>
<comment type="similarity">
    <text evidence="5">Belongs to the G-protein coupled receptor 1 family.</text>
</comment>
<dbReference type="EMBL" id="DQ663625">
    <property type="protein sequence ID" value="ABG48760.1"/>
    <property type="molecule type" value="Genomic_DNA"/>
</dbReference>
<dbReference type="RefSeq" id="XP_025853352.1">
    <property type="nucleotide sequence ID" value="XM_025997567.1"/>
</dbReference>
<dbReference type="SMR" id="Q0Z8I9"/>
<dbReference type="STRING" id="9627.ENSVVUP00000021787"/>
<dbReference type="GlyCosmos" id="Q0Z8I9">
    <property type="glycosylation" value="3 sites, No reported glycans"/>
</dbReference>
<dbReference type="GeneID" id="112919220"/>
<dbReference type="OMA" id="FYISCPH"/>
<dbReference type="Proteomes" id="UP000286640">
    <property type="component" value="Unplaced"/>
</dbReference>
<dbReference type="GO" id="GO:0005886">
    <property type="term" value="C:plasma membrane"/>
    <property type="evidence" value="ECO:0007669"/>
    <property type="project" value="UniProtKB-SubCell"/>
</dbReference>
<dbReference type="GO" id="GO:0004977">
    <property type="term" value="F:melanocortin receptor activity"/>
    <property type="evidence" value="ECO:0007669"/>
    <property type="project" value="InterPro"/>
</dbReference>
<dbReference type="CDD" id="cd15353">
    <property type="entry name" value="7tmA_MC4R"/>
    <property type="match status" value="1"/>
</dbReference>
<dbReference type="FunFam" id="1.20.1070.10:FF:000077">
    <property type="entry name" value="Melanocortin receptor 4"/>
    <property type="match status" value="1"/>
</dbReference>
<dbReference type="Gene3D" id="1.20.1070.10">
    <property type="entry name" value="Rhodopsin 7-helix transmembrane proteins"/>
    <property type="match status" value="1"/>
</dbReference>
<dbReference type="InterPro" id="IPR000276">
    <property type="entry name" value="GPCR_Rhodpsn"/>
</dbReference>
<dbReference type="InterPro" id="IPR017452">
    <property type="entry name" value="GPCR_Rhodpsn_7TM"/>
</dbReference>
<dbReference type="InterPro" id="IPR001908">
    <property type="entry name" value="MC3-5R"/>
</dbReference>
<dbReference type="InterPro" id="IPR000155">
    <property type="entry name" value="Mcort_rcpt_4"/>
</dbReference>
<dbReference type="InterPro" id="IPR001671">
    <property type="entry name" value="Melcrt_ACTH_rcpt"/>
</dbReference>
<dbReference type="PANTHER" id="PTHR22750">
    <property type="entry name" value="G-PROTEIN COUPLED RECEPTOR"/>
    <property type="match status" value="1"/>
</dbReference>
<dbReference type="Pfam" id="PF00001">
    <property type="entry name" value="7tm_1"/>
    <property type="match status" value="1"/>
</dbReference>
<dbReference type="PRINTS" id="PR00237">
    <property type="entry name" value="GPCRRHODOPSN"/>
</dbReference>
<dbReference type="PRINTS" id="PR00534">
    <property type="entry name" value="MCRFAMILY"/>
</dbReference>
<dbReference type="PRINTS" id="PR00535">
    <property type="entry name" value="MELNOCORTINR"/>
</dbReference>
<dbReference type="PRINTS" id="PR01062">
    <property type="entry name" value="MELNOCORTN4R"/>
</dbReference>
<dbReference type="SMART" id="SM01381">
    <property type="entry name" value="7TM_GPCR_Srsx"/>
    <property type="match status" value="1"/>
</dbReference>
<dbReference type="SUPFAM" id="SSF81321">
    <property type="entry name" value="Family A G protein-coupled receptor-like"/>
    <property type="match status" value="1"/>
</dbReference>
<dbReference type="PROSITE" id="PS00237">
    <property type="entry name" value="G_PROTEIN_RECEP_F1_1"/>
    <property type="match status" value="1"/>
</dbReference>
<dbReference type="PROSITE" id="PS50262">
    <property type="entry name" value="G_PROTEIN_RECEP_F1_2"/>
    <property type="match status" value="1"/>
</dbReference>
<keyword id="KW-0106">Calcium</keyword>
<keyword id="KW-1003">Cell membrane</keyword>
<keyword id="KW-1015">Disulfide bond</keyword>
<keyword id="KW-0297">G-protein coupled receptor</keyword>
<keyword id="KW-0325">Glycoprotein</keyword>
<keyword id="KW-0449">Lipoprotein</keyword>
<keyword id="KW-0472">Membrane</keyword>
<keyword id="KW-0479">Metal-binding</keyword>
<keyword id="KW-0564">Palmitate</keyword>
<keyword id="KW-0675">Receptor</keyword>
<keyword id="KW-1185">Reference proteome</keyword>
<keyword id="KW-0807">Transducer</keyword>
<keyword id="KW-0812">Transmembrane</keyword>
<keyword id="KW-1133">Transmembrane helix</keyword>
<accession>Q0Z8I9</accession>
<protein>
    <recommendedName>
        <fullName>Melanocortin receptor 4</fullName>
        <shortName>MC4-R</shortName>
    </recommendedName>
</protein>
<feature type="chain" id="PRO_0000253757" description="Melanocortin receptor 4">
    <location>
        <begin position="1"/>
        <end position="332"/>
    </location>
</feature>
<feature type="topological domain" description="Extracellular" evidence="4">
    <location>
        <begin position="1"/>
        <end position="43"/>
    </location>
</feature>
<feature type="transmembrane region" description="Helical; Name=1" evidence="4">
    <location>
        <begin position="44"/>
        <end position="69"/>
    </location>
</feature>
<feature type="topological domain" description="Cytoplasmic" evidence="4">
    <location>
        <begin position="70"/>
        <end position="81"/>
    </location>
</feature>
<feature type="transmembrane region" description="Helical; Name=2" evidence="4">
    <location>
        <begin position="82"/>
        <end position="106"/>
    </location>
</feature>
<feature type="topological domain" description="Extracellular" evidence="4">
    <location>
        <begin position="107"/>
        <end position="123"/>
    </location>
</feature>
<feature type="transmembrane region" description="Helical; Name=3" evidence="4">
    <location>
        <begin position="124"/>
        <end position="145"/>
    </location>
</feature>
<feature type="topological domain" description="Cytoplasmic" evidence="4">
    <location>
        <begin position="146"/>
        <end position="165"/>
    </location>
</feature>
<feature type="transmembrane region" description="Helical; Name=4" evidence="4">
    <location>
        <begin position="166"/>
        <end position="186"/>
    </location>
</feature>
<feature type="topological domain" description="Extracellular" evidence="4">
    <location>
        <begin position="187"/>
        <end position="191"/>
    </location>
</feature>
<feature type="transmembrane region" description="Helical; Name=5" evidence="4">
    <location>
        <begin position="192"/>
        <end position="215"/>
    </location>
</feature>
<feature type="topological domain" description="Cytoplasmic" evidence="4">
    <location>
        <begin position="216"/>
        <end position="248"/>
    </location>
</feature>
<feature type="transmembrane region" description="Helical; Name=6" evidence="4">
    <location>
        <begin position="249"/>
        <end position="271"/>
    </location>
</feature>
<feature type="topological domain" description="Extracellular" evidence="4">
    <location>
        <begin position="272"/>
        <end position="280"/>
    </location>
</feature>
<feature type="transmembrane region" description="Helical; Name=7" evidence="4">
    <location>
        <begin position="281"/>
        <end position="304"/>
    </location>
</feature>
<feature type="topological domain" description="Cytoplasmic" evidence="4">
    <location>
        <begin position="305"/>
        <end position="332"/>
    </location>
</feature>
<feature type="binding site" evidence="2">
    <location>
        <position position="100"/>
    </location>
    <ligand>
        <name>Ca(2+)</name>
        <dbReference type="ChEBI" id="CHEBI:29108"/>
    </ligand>
</feature>
<feature type="binding site" evidence="2">
    <location>
        <position position="122"/>
    </location>
    <ligand>
        <name>Ca(2+)</name>
        <dbReference type="ChEBI" id="CHEBI:29108"/>
    </ligand>
</feature>
<feature type="binding site" evidence="2">
    <location>
        <position position="126"/>
    </location>
    <ligand>
        <name>Ca(2+)</name>
        <dbReference type="ChEBI" id="CHEBI:29108"/>
    </ligand>
</feature>
<feature type="lipid moiety-binding region" description="S-palmitoyl cysteine" evidence="4">
    <location>
        <position position="318"/>
    </location>
</feature>
<feature type="glycosylation site" description="N-linked (GlcNAc...) asparagine" evidence="4">
    <location>
        <position position="2"/>
    </location>
</feature>
<feature type="glycosylation site" description="N-linked (GlcNAc...) asparagine" evidence="4">
    <location>
        <position position="17"/>
    </location>
</feature>
<feature type="glycosylation site" description="N-linked (GlcNAc...) asparagine" evidence="4">
    <location>
        <position position="26"/>
    </location>
</feature>
<feature type="disulfide bond" evidence="2">
    <location>
        <begin position="40"/>
        <end position="279"/>
    </location>
</feature>
<feature type="disulfide bond" description="Interchain" evidence="5">
    <location>
        <position position="84"/>
    </location>
</feature>
<feature type="disulfide bond" evidence="2">
    <location>
        <begin position="271"/>
        <end position="277"/>
    </location>
</feature>
<sequence>MNSTLQHGMHTSLHFWNRSTYGQHSNATESLGKGYPDGGCYEQLFVSPEVFVTLGVISLLENILVIVAIAKNKNLHSPMYFFICSLAVADMLVSVSNGSETIVITLLNSTDTDAQSFTVNIDNVIDSVICSSLLASICSLLSIAVDRYFTIFYALQYHNIMTVRRVGIIISCIWAACTVSGILFIIYSDSTAVIICLITMFFTMLALMASLYVHMFLMARLHIKRIAVLPGTGTIRQGANMKGAITLTILIGVFVVCWAPFFLHLIFYISCPQNPYCVCFMSHFNLYLILIMCNSIIDPLIYALRSQELRKTFKEIICCYPLGGLCDLSSRY</sequence>
<name>MC4R_VULVU</name>
<evidence type="ECO:0000250" key="1"/>
<evidence type="ECO:0000250" key="2">
    <source>
        <dbReference type="UniProtKB" id="P32245"/>
    </source>
</evidence>
<evidence type="ECO:0000250" key="3">
    <source>
        <dbReference type="UniProtKB" id="P56450"/>
    </source>
</evidence>
<evidence type="ECO:0000255" key="4"/>
<evidence type="ECO:0000255" key="5">
    <source>
        <dbReference type="PROSITE-ProRule" id="PRU00521"/>
    </source>
</evidence>
<gene>
    <name type="primary">MC4R</name>
</gene>
<organism>
    <name type="scientific">Vulpes vulpes</name>
    <name type="common">Red fox</name>
    <dbReference type="NCBI Taxonomy" id="9627"/>
    <lineage>
        <taxon>Eukaryota</taxon>
        <taxon>Metazoa</taxon>
        <taxon>Chordata</taxon>
        <taxon>Craniata</taxon>
        <taxon>Vertebrata</taxon>
        <taxon>Euteleostomi</taxon>
        <taxon>Mammalia</taxon>
        <taxon>Eutheria</taxon>
        <taxon>Laurasiatheria</taxon>
        <taxon>Carnivora</taxon>
        <taxon>Caniformia</taxon>
        <taxon>Canidae</taxon>
        <taxon>Vulpes</taxon>
    </lineage>
</organism>